<gene>
    <name type="primary">HAK16</name>
    <name type="ordered locus">Os03g0575200</name>
    <name type="ordered locus">LOC_Os03g37840</name>
    <name type="ORF">OsJ_11514</name>
    <name type="ORF">OSJNBa0008D12.19</name>
    <name type="ORF">OSJNBa0029P07.17</name>
</gene>
<organism>
    <name type="scientific">Oryza sativa subsp. japonica</name>
    <name type="common">Rice</name>
    <dbReference type="NCBI Taxonomy" id="39947"/>
    <lineage>
        <taxon>Eukaryota</taxon>
        <taxon>Viridiplantae</taxon>
        <taxon>Streptophyta</taxon>
        <taxon>Embryophyta</taxon>
        <taxon>Tracheophyta</taxon>
        <taxon>Spermatophyta</taxon>
        <taxon>Magnoliopsida</taxon>
        <taxon>Liliopsida</taxon>
        <taxon>Poales</taxon>
        <taxon>Poaceae</taxon>
        <taxon>BOP clade</taxon>
        <taxon>Oryzoideae</taxon>
        <taxon>Oryzeae</taxon>
        <taxon>Oryzinae</taxon>
        <taxon>Oryza</taxon>
        <taxon>Oryza sativa</taxon>
    </lineage>
</organism>
<sequence length="811" mass="92258">MAQQQAGARGSKLEIVAARGGSGGSSSAGDAEAPPLDVLRQDSLYRDATRPAHGHHGQESWMRTLRLGFQCVGILHADLGTSPLYVYQNTFKYGIKHEDDIIGVLSLIIYSFVLFTMVKIVFIALHANDDGDGGTFALYSLISRYAKVCLIPNQQAEDELVTRYNDHGKPPATLRRAQWMKSQLEKKPAKIAVFFLTIFATALAISDCVLNPSVSVLSAVNGLKLRAPHLTTDEVVWITVGILVVFFAVQRFGTDKIGYTFAPVVVVWLLLISGIGIYDLVKYDVGVLRAFNPKYIIDYFRRNKKDGWVQLGEVLLTFTGTEALFADLGYFSIKSIQLSSTFVLLPSVLCTYIGQAAYLRKHMDQQHIQNAFFNSIPRPLFWPMFVLAIMTSVIGCQAMVSCAFATMSHLQTLNCFPRIKILHTSRRYSGQLYSPEVNFFLCLLSCVITLSFRTTGFIVKAHEICVVLVMVITTILMTIVMLLVWKVNIWWIVLFFVVFMSTETVYLSAVLYKFTKGPYMPLAMSAVLMVIMFVWHYVHVKRYKFELEHTVSPNKVRELLERRDLKRVPGVGLFYTELVQGIPPIFPHLIEKIPTIHSVIVFISMKHLPIPHVDVSERFLFRQVEPKECMVFRCVARYGYRDTLEMADDFVTTLVEYLQYYIRDLNLYNTVEPLKMSCPSIRIDSFSWDRRPSGHGIYAEEMLTPIQSFSELTMHPVGMSSRLAQFQTTKMSLEEMLKIEEDQKLIQREVDNGVVYILGESEVVAKPHSNLLKKVVVNYIFNFLRKNSRKGEKMLSIPRRKLLKVGITYEI</sequence>
<name>HAK16_ORYSJ</name>
<protein>
    <recommendedName>
        <fullName>Probable potassium transporter 16</fullName>
    </recommendedName>
    <alternativeName>
        <fullName>OsHAK16</fullName>
    </alternativeName>
</protein>
<accession>Q84MS3</accession>
<accession>A0A0P0W098</accession>
<accession>Q10HV0</accession>
<accession>Q8VXB8</accession>
<reference key="1">
    <citation type="journal article" date="2005" name="Genome Res.">
        <title>Sequence, annotation, and analysis of synteny between rice chromosome 3 and diverged grass species.</title>
        <authorList>
            <consortium name="The rice chromosome 3 sequencing consortium"/>
            <person name="Buell C.R."/>
            <person name="Yuan Q."/>
            <person name="Ouyang S."/>
            <person name="Liu J."/>
            <person name="Zhu W."/>
            <person name="Wang A."/>
            <person name="Maiti R."/>
            <person name="Haas B."/>
            <person name="Wortman J."/>
            <person name="Pertea M."/>
            <person name="Jones K.M."/>
            <person name="Kim M."/>
            <person name="Overton L."/>
            <person name="Tsitrin T."/>
            <person name="Fadrosh D."/>
            <person name="Bera J."/>
            <person name="Weaver B."/>
            <person name="Jin S."/>
            <person name="Johri S."/>
            <person name="Reardon M."/>
            <person name="Webb K."/>
            <person name="Hill J."/>
            <person name="Moffat K."/>
            <person name="Tallon L."/>
            <person name="Van Aken S."/>
            <person name="Lewis M."/>
            <person name="Utterback T."/>
            <person name="Feldblyum T."/>
            <person name="Zismann V."/>
            <person name="Iobst S."/>
            <person name="Hsiao J."/>
            <person name="de Vazeille A.R."/>
            <person name="Salzberg S.L."/>
            <person name="White O."/>
            <person name="Fraser C.M."/>
            <person name="Yu Y."/>
            <person name="Kim H."/>
            <person name="Rambo T."/>
            <person name="Currie J."/>
            <person name="Collura K."/>
            <person name="Kernodle-Thompson S."/>
            <person name="Wei F."/>
            <person name="Kudrna K."/>
            <person name="Ammiraju J.S.S."/>
            <person name="Luo M."/>
            <person name="Goicoechea J.L."/>
            <person name="Wing R.A."/>
            <person name="Henry D."/>
            <person name="Oates R."/>
            <person name="Palmer M."/>
            <person name="Pries G."/>
            <person name="Saski C."/>
            <person name="Simmons J."/>
            <person name="Soderlund C."/>
            <person name="Nelson W."/>
            <person name="de la Bastide M."/>
            <person name="Spiegel L."/>
            <person name="Nascimento L."/>
            <person name="Huang E."/>
            <person name="Preston R."/>
            <person name="Zutavern T."/>
            <person name="Palmer L."/>
            <person name="O'Shaughnessy A."/>
            <person name="Dike S."/>
            <person name="McCombie W.R."/>
            <person name="Minx P."/>
            <person name="Cordum H."/>
            <person name="Wilson R."/>
            <person name="Jin W."/>
            <person name="Lee H.R."/>
            <person name="Jiang J."/>
            <person name="Jackson S."/>
        </authorList>
    </citation>
    <scope>NUCLEOTIDE SEQUENCE [LARGE SCALE GENOMIC DNA]</scope>
    <source>
        <strain>cv. Nipponbare</strain>
    </source>
</reference>
<reference key="2">
    <citation type="journal article" date="2005" name="Nature">
        <title>The map-based sequence of the rice genome.</title>
        <authorList>
            <consortium name="International rice genome sequencing project (IRGSP)"/>
        </authorList>
    </citation>
    <scope>NUCLEOTIDE SEQUENCE [LARGE SCALE GENOMIC DNA]</scope>
    <source>
        <strain>cv. Nipponbare</strain>
    </source>
</reference>
<reference key="3">
    <citation type="journal article" date="2008" name="Nucleic Acids Res.">
        <title>The rice annotation project database (RAP-DB): 2008 update.</title>
        <authorList>
            <consortium name="The rice annotation project (RAP)"/>
        </authorList>
    </citation>
    <scope>GENOME REANNOTATION</scope>
    <source>
        <strain>cv. Nipponbare</strain>
    </source>
</reference>
<reference key="4">
    <citation type="journal article" date="2013" name="Rice">
        <title>Improvement of the Oryza sativa Nipponbare reference genome using next generation sequence and optical map data.</title>
        <authorList>
            <person name="Kawahara Y."/>
            <person name="de la Bastide M."/>
            <person name="Hamilton J.P."/>
            <person name="Kanamori H."/>
            <person name="McCombie W.R."/>
            <person name="Ouyang S."/>
            <person name="Schwartz D.C."/>
            <person name="Tanaka T."/>
            <person name="Wu J."/>
            <person name="Zhou S."/>
            <person name="Childs K.L."/>
            <person name="Davidson R.M."/>
            <person name="Lin H."/>
            <person name="Quesada-Ocampo L."/>
            <person name="Vaillancourt B."/>
            <person name="Sakai H."/>
            <person name="Lee S.S."/>
            <person name="Kim J."/>
            <person name="Numa H."/>
            <person name="Itoh T."/>
            <person name="Buell C.R."/>
            <person name="Matsumoto T."/>
        </authorList>
    </citation>
    <scope>GENOME REANNOTATION</scope>
    <source>
        <strain>cv. Nipponbare</strain>
    </source>
</reference>
<reference key="5">
    <citation type="journal article" date="2005" name="PLoS Biol.">
        <title>The genomes of Oryza sativa: a history of duplications.</title>
        <authorList>
            <person name="Yu J."/>
            <person name="Wang J."/>
            <person name="Lin W."/>
            <person name="Li S."/>
            <person name="Li H."/>
            <person name="Zhou J."/>
            <person name="Ni P."/>
            <person name="Dong W."/>
            <person name="Hu S."/>
            <person name="Zeng C."/>
            <person name="Zhang J."/>
            <person name="Zhang Y."/>
            <person name="Li R."/>
            <person name="Xu Z."/>
            <person name="Li S."/>
            <person name="Li X."/>
            <person name="Zheng H."/>
            <person name="Cong L."/>
            <person name="Lin L."/>
            <person name="Yin J."/>
            <person name="Geng J."/>
            <person name="Li G."/>
            <person name="Shi J."/>
            <person name="Liu J."/>
            <person name="Lv H."/>
            <person name="Li J."/>
            <person name="Wang J."/>
            <person name="Deng Y."/>
            <person name="Ran L."/>
            <person name="Shi X."/>
            <person name="Wang X."/>
            <person name="Wu Q."/>
            <person name="Li C."/>
            <person name="Ren X."/>
            <person name="Wang J."/>
            <person name="Wang X."/>
            <person name="Li D."/>
            <person name="Liu D."/>
            <person name="Zhang X."/>
            <person name="Ji Z."/>
            <person name="Zhao W."/>
            <person name="Sun Y."/>
            <person name="Zhang Z."/>
            <person name="Bao J."/>
            <person name="Han Y."/>
            <person name="Dong L."/>
            <person name="Ji J."/>
            <person name="Chen P."/>
            <person name="Wu S."/>
            <person name="Liu J."/>
            <person name="Xiao Y."/>
            <person name="Bu D."/>
            <person name="Tan J."/>
            <person name="Yang L."/>
            <person name="Ye C."/>
            <person name="Zhang J."/>
            <person name="Xu J."/>
            <person name="Zhou Y."/>
            <person name="Yu Y."/>
            <person name="Zhang B."/>
            <person name="Zhuang S."/>
            <person name="Wei H."/>
            <person name="Liu B."/>
            <person name="Lei M."/>
            <person name="Yu H."/>
            <person name="Li Y."/>
            <person name="Xu H."/>
            <person name="Wei S."/>
            <person name="He X."/>
            <person name="Fang L."/>
            <person name="Zhang Z."/>
            <person name="Zhang Y."/>
            <person name="Huang X."/>
            <person name="Su Z."/>
            <person name="Tong W."/>
            <person name="Li J."/>
            <person name="Tong Z."/>
            <person name="Li S."/>
            <person name="Ye J."/>
            <person name="Wang L."/>
            <person name="Fang L."/>
            <person name="Lei T."/>
            <person name="Chen C.-S."/>
            <person name="Chen H.-C."/>
            <person name="Xu Z."/>
            <person name="Li H."/>
            <person name="Huang H."/>
            <person name="Zhang F."/>
            <person name="Xu H."/>
            <person name="Li N."/>
            <person name="Zhao C."/>
            <person name="Li S."/>
            <person name="Dong L."/>
            <person name="Huang Y."/>
            <person name="Li L."/>
            <person name="Xi Y."/>
            <person name="Qi Q."/>
            <person name="Li W."/>
            <person name="Zhang B."/>
            <person name="Hu W."/>
            <person name="Zhang Y."/>
            <person name="Tian X."/>
            <person name="Jiao Y."/>
            <person name="Liang X."/>
            <person name="Jin J."/>
            <person name="Gao L."/>
            <person name="Zheng W."/>
            <person name="Hao B."/>
            <person name="Liu S.-M."/>
            <person name="Wang W."/>
            <person name="Yuan L."/>
            <person name="Cao M."/>
            <person name="McDermott J."/>
            <person name="Samudrala R."/>
            <person name="Wang J."/>
            <person name="Wong G.K.-S."/>
            <person name="Yang H."/>
        </authorList>
    </citation>
    <scope>NUCLEOTIDE SEQUENCE [LARGE SCALE GENOMIC DNA]</scope>
    <source>
        <strain>cv. Nipponbare</strain>
    </source>
</reference>
<reference key="6">
    <citation type="journal article" date="2003" name="Science">
        <title>Collection, mapping, and annotation of over 28,000 cDNA clones from japonica rice.</title>
        <authorList>
            <consortium name="The rice full-length cDNA consortium"/>
        </authorList>
    </citation>
    <scope>NUCLEOTIDE SEQUENCE [LARGE SCALE MRNA]</scope>
    <source>
        <strain>cv. Nipponbare</strain>
    </source>
</reference>
<reference key="7">
    <citation type="journal article" date="2002" name="Plant Physiol.">
        <title>Inventory and functional characterization of the HAK potassium transporters of rice.</title>
        <authorList>
            <person name="Banuelos M.A."/>
            <person name="Garciadeblas B."/>
            <person name="Cubero B."/>
            <person name="Rodriguez-Navarro A."/>
        </authorList>
    </citation>
    <scope>NUCLEOTIDE SEQUENCE [MRNA] OF 80-811</scope>
    <scope>NOMENCLATURE</scope>
    <source>
        <strain>cv. Nipponbare</strain>
    </source>
</reference>
<reference key="8">
    <citation type="journal article" date="2009" name="J. Genet. Genomics">
        <title>Molecular evolution and functional divergence of HAK potassium transporter gene family in rice (Oryza sativa L.).</title>
        <authorList>
            <person name="Yang Z."/>
            <person name="Gao Q."/>
            <person name="Sun C."/>
            <person name="Li W."/>
            <person name="Gu S."/>
            <person name="Xu C."/>
        </authorList>
    </citation>
    <scope>GENE FAMILY</scope>
</reference>
<evidence type="ECO:0000250" key="1"/>
<evidence type="ECO:0000255" key="2"/>
<evidence type="ECO:0000305" key="3"/>
<dbReference type="EMBL" id="AC134887">
    <property type="protein sequence ID" value="AAP12969.1"/>
    <property type="molecule type" value="Genomic_DNA"/>
</dbReference>
<dbReference type="EMBL" id="AC146468">
    <property type="protein sequence ID" value="AAR10864.1"/>
    <property type="molecule type" value="Genomic_DNA"/>
</dbReference>
<dbReference type="EMBL" id="DP000009">
    <property type="protein sequence ID" value="ABF97240.1"/>
    <property type="molecule type" value="Genomic_DNA"/>
</dbReference>
<dbReference type="EMBL" id="AP008209">
    <property type="protein sequence ID" value="BAF12444.1"/>
    <property type="molecule type" value="Genomic_DNA"/>
</dbReference>
<dbReference type="EMBL" id="AP014959">
    <property type="protein sequence ID" value="BAS85015.1"/>
    <property type="molecule type" value="Genomic_DNA"/>
</dbReference>
<dbReference type="EMBL" id="CM000140">
    <property type="protein sequence ID" value="EAZ27567.1"/>
    <property type="molecule type" value="Genomic_DNA"/>
</dbReference>
<dbReference type="EMBL" id="AK066919">
    <property type="status" value="NOT_ANNOTATED_CDS"/>
    <property type="molecule type" value="mRNA"/>
</dbReference>
<dbReference type="EMBL" id="AJ427973">
    <property type="protein sequence ID" value="CAD20994.1"/>
    <property type="molecule type" value="mRNA"/>
</dbReference>
<dbReference type="RefSeq" id="XP_015633191.1">
    <property type="nucleotide sequence ID" value="XM_015777705.1"/>
</dbReference>
<dbReference type="FunCoup" id="Q84MS3">
    <property type="interactions" value="26"/>
</dbReference>
<dbReference type="STRING" id="39947.Q84MS3"/>
<dbReference type="PaxDb" id="39947-Q84MS3"/>
<dbReference type="EnsemblPlants" id="Os03t0575200-01">
    <property type="protein sequence ID" value="Os03t0575200-01"/>
    <property type="gene ID" value="Os03g0575200"/>
</dbReference>
<dbReference type="Gramene" id="Os03t0575200-01">
    <property type="protein sequence ID" value="Os03t0575200-01"/>
    <property type="gene ID" value="Os03g0575200"/>
</dbReference>
<dbReference type="KEGG" id="dosa:Os03g0575200"/>
<dbReference type="eggNOG" id="ENOG502QPSA">
    <property type="taxonomic scope" value="Eukaryota"/>
</dbReference>
<dbReference type="HOGENOM" id="CLU_008142_2_0_1"/>
<dbReference type="InParanoid" id="Q84MS3"/>
<dbReference type="OMA" id="RKEIACD"/>
<dbReference type="OrthoDB" id="504708at2759"/>
<dbReference type="Proteomes" id="UP000000763">
    <property type="component" value="Chromosome 3"/>
</dbReference>
<dbReference type="Proteomes" id="UP000007752">
    <property type="component" value="Chromosome 3"/>
</dbReference>
<dbReference type="Proteomes" id="UP000059680">
    <property type="component" value="Chromosome 3"/>
</dbReference>
<dbReference type="GO" id="GO:0016020">
    <property type="term" value="C:membrane"/>
    <property type="evidence" value="ECO:0000318"/>
    <property type="project" value="GO_Central"/>
</dbReference>
<dbReference type="GO" id="GO:0015079">
    <property type="term" value="F:potassium ion transmembrane transporter activity"/>
    <property type="evidence" value="ECO:0000318"/>
    <property type="project" value="GO_Central"/>
</dbReference>
<dbReference type="GO" id="GO:0006813">
    <property type="term" value="P:potassium ion transport"/>
    <property type="evidence" value="ECO:0000318"/>
    <property type="project" value="GO_Central"/>
</dbReference>
<dbReference type="InterPro" id="IPR003855">
    <property type="entry name" value="K+_transporter"/>
</dbReference>
<dbReference type="InterPro" id="IPR053952">
    <property type="entry name" value="K_trans_C"/>
</dbReference>
<dbReference type="InterPro" id="IPR053951">
    <property type="entry name" value="K_trans_N"/>
</dbReference>
<dbReference type="NCBIfam" id="TIGR00794">
    <property type="entry name" value="kup"/>
    <property type="match status" value="1"/>
</dbReference>
<dbReference type="PANTHER" id="PTHR30540">
    <property type="entry name" value="OSMOTIC STRESS POTASSIUM TRANSPORTER"/>
    <property type="match status" value="1"/>
</dbReference>
<dbReference type="PANTHER" id="PTHR30540:SF23">
    <property type="entry name" value="POTASSIUM TRANSPORTER 16-RELATED"/>
    <property type="match status" value="1"/>
</dbReference>
<dbReference type="Pfam" id="PF02705">
    <property type="entry name" value="K_trans"/>
    <property type="match status" value="1"/>
</dbReference>
<dbReference type="Pfam" id="PF22776">
    <property type="entry name" value="K_trans_C"/>
    <property type="match status" value="1"/>
</dbReference>
<feature type="chain" id="PRO_0000209103" description="Probable potassium transporter 16">
    <location>
        <begin position="1"/>
        <end position="811"/>
    </location>
</feature>
<feature type="topological domain" description="Cytoplasmic" evidence="2">
    <location>
        <begin position="1"/>
        <end position="66"/>
    </location>
</feature>
<feature type="transmembrane region" description="Helical; Name=1" evidence="2">
    <location>
        <begin position="67"/>
        <end position="87"/>
    </location>
</feature>
<feature type="topological domain" description="Extracellular" evidence="2">
    <location>
        <begin position="88"/>
        <end position="100"/>
    </location>
</feature>
<feature type="transmembrane region" description="Helical; Name=2" evidence="2">
    <location>
        <begin position="101"/>
        <end position="121"/>
    </location>
</feature>
<feature type="topological domain" description="Cytoplasmic" evidence="2">
    <location>
        <begin position="122"/>
        <end position="190"/>
    </location>
</feature>
<feature type="transmembrane region" description="Helical; Name=3" evidence="2">
    <location>
        <begin position="191"/>
        <end position="211"/>
    </location>
</feature>
<feature type="topological domain" description="Extracellular" evidence="2">
    <location>
        <begin position="212"/>
        <end position="228"/>
    </location>
</feature>
<feature type="transmembrane region" description="Helical; Name=4" evidence="2">
    <location>
        <begin position="229"/>
        <end position="249"/>
    </location>
</feature>
<feature type="topological domain" description="Cytoplasmic" evidence="2">
    <location>
        <begin position="250"/>
        <end position="256"/>
    </location>
</feature>
<feature type="transmembrane region" description="Helical; Name=5" evidence="2">
    <location>
        <begin position="257"/>
        <end position="277"/>
    </location>
</feature>
<feature type="topological domain" description="Extracellular" evidence="2">
    <location>
        <begin position="278"/>
        <end position="310"/>
    </location>
</feature>
<feature type="transmembrane region" description="Helical; Name=6" evidence="2">
    <location>
        <begin position="311"/>
        <end position="331"/>
    </location>
</feature>
<feature type="topological domain" description="Cytoplasmic" evidence="2">
    <location>
        <begin position="332"/>
        <end position="337"/>
    </location>
</feature>
<feature type="transmembrane region" description="Helical; Name=7" evidence="2">
    <location>
        <begin position="338"/>
        <end position="358"/>
    </location>
</feature>
<feature type="topological domain" description="Extracellular" evidence="2">
    <location>
        <begin position="359"/>
        <end position="379"/>
    </location>
</feature>
<feature type="transmembrane region" description="Helical; Name=8" evidence="2">
    <location>
        <begin position="380"/>
        <end position="400"/>
    </location>
</feature>
<feature type="topological domain" description="Cytoplasmic" evidence="2">
    <location>
        <begin position="401"/>
        <end position="438"/>
    </location>
</feature>
<feature type="transmembrane region" description="Helical; Name=9" evidence="2">
    <location>
        <begin position="439"/>
        <end position="459"/>
    </location>
</feature>
<feature type="topological domain" description="Extracellular" evidence="2">
    <location>
        <begin position="460"/>
        <end position="463"/>
    </location>
</feature>
<feature type="transmembrane region" description="Helical; Name=10" evidence="2">
    <location>
        <begin position="464"/>
        <end position="484"/>
    </location>
</feature>
<feature type="topological domain" description="Cytoplasmic" evidence="2">
    <location>
        <begin position="485"/>
        <end position="488"/>
    </location>
</feature>
<feature type="transmembrane region" description="Helical; Name=11" evidence="2">
    <location>
        <begin position="489"/>
        <end position="509"/>
    </location>
</feature>
<feature type="topological domain" description="Extracellular" evidence="2">
    <location>
        <begin position="510"/>
        <end position="519"/>
    </location>
</feature>
<feature type="transmembrane region" description="Helical; Name=12" evidence="2">
    <location>
        <begin position="520"/>
        <end position="540"/>
    </location>
</feature>
<feature type="topological domain" description="Cytoplasmic" evidence="2">
    <location>
        <begin position="541"/>
        <end position="811"/>
    </location>
</feature>
<feature type="sequence conflict" description="In Ref. 7; CAD20994." evidence="3" ref="7">
    <original>A</original>
    <variation>G</variation>
    <location>
        <position position="405"/>
    </location>
</feature>
<feature type="sequence conflict" description="In Ref. 6; AK066919." evidence="3" ref="6">
    <original>A</original>
    <variation>V</variation>
    <location>
        <position position="405"/>
    </location>
</feature>
<feature type="sequence conflict" description="In Ref. 7; CAD20994." evidence="3" ref="7">
    <original>K</original>
    <variation>E</variation>
    <location>
        <position position="606"/>
    </location>
</feature>
<feature type="sequence conflict" description="In Ref. 7; CAD20994." evidence="3" ref="7">
    <original>YI</original>
    <variation>LYP</variation>
    <location>
        <begin position="661"/>
        <end position="662"/>
    </location>
</feature>
<comment type="function">
    <text evidence="1">High-affinity potassium transporter.</text>
</comment>
<comment type="subcellular location">
    <subcellularLocation>
        <location evidence="3">Membrane</location>
        <topology evidence="3">Multi-pass membrane protein</topology>
    </subcellularLocation>
</comment>
<comment type="similarity">
    <text evidence="3">Belongs to the HAK/KUP transporter (TC 2.A.72.3) family.</text>
</comment>
<keyword id="KW-0406">Ion transport</keyword>
<keyword id="KW-0472">Membrane</keyword>
<keyword id="KW-0630">Potassium</keyword>
<keyword id="KW-0633">Potassium transport</keyword>
<keyword id="KW-1185">Reference proteome</keyword>
<keyword id="KW-0812">Transmembrane</keyword>
<keyword id="KW-1133">Transmembrane helix</keyword>
<keyword id="KW-0813">Transport</keyword>
<proteinExistence type="evidence at transcript level"/>